<gene>
    <name type="primary">Stmn4</name>
</gene>
<name>STMN4_RAT</name>
<evidence type="ECO:0000250" key="1"/>
<evidence type="ECO:0000255" key="2"/>
<evidence type="ECO:0000255" key="3">
    <source>
        <dbReference type="PROSITE-ProRule" id="PRU00998"/>
    </source>
</evidence>
<evidence type="ECO:0000256" key="4">
    <source>
        <dbReference type="SAM" id="MobiDB-lite"/>
    </source>
</evidence>
<evidence type="ECO:0000269" key="5">
    <source>
    </source>
</evidence>
<evidence type="ECO:0000269" key="6">
    <source>
    </source>
</evidence>
<evidence type="ECO:0000269" key="7">
    <source>
    </source>
</evidence>
<evidence type="ECO:0000269" key="8">
    <source>
    </source>
</evidence>
<evidence type="ECO:0000303" key="9">
    <source>
    </source>
</evidence>
<evidence type="ECO:0000305" key="10"/>
<evidence type="ECO:0007744" key="11">
    <source>
    </source>
</evidence>
<evidence type="ECO:0007829" key="12">
    <source>
        <dbReference type="PDB" id="4I4T"/>
    </source>
</evidence>
<evidence type="ECO:0007829" key="13">
    <source>
        <dbReference type="PDB" id="6TIZ"/>
    </source>
</evidence>
<evidence type="ECO:0007829" key="14">
    <source>
        <dbReference type="PDB" id="7TTD"/>
    </source>
</evidence>
<reference key="1">
    <citation type="journal article" date="1997" name="Eur. J. Biochem.">
        <title>The stathmin family -- molecular and biological characterization of novel mammalian proteins expressed in the nervous system.</title>
        <authorList>
            <person name="Ozon S."/>
            <person name="Maucuer A."/>
            <person name="Sobel A."/>
        </authorList>
    </citation>
    <scope>NUCLEOTIDE SEQUENCE [MRNA] (ISOFORMS 1; 2 AND 3)</scope>
    <scope>TISSUE SPECIFICITY</scope>
    <source>
        <strain>Sprague-Dawley</strain>
        <tissue>Corpus striatum</tissue>
    </source>
</reference>
<reference key="2">
    <citation type="journal article" date="2004" name="J. Biol. Chem.">
        <title>Modulation of the stathmin-like microtubule destabilizing activity of RB3, a neuron-specific member of the SCG10 family, by its N-terminal domain.</title>
        <authorList>
            <person name="Nakao C."/>
            <person name="Itoh T.J."/>
            <person name="Hotani H."/>
            <person name="Mori N."/>
        </authorList>
    </citation>
    <scope>FUNCTION</scope>
    <scope>TISSUE SPECIFICITY</scope>
</reference>
<reference key="3">
    <citation type="journal article" date="2002" name="J. Neurosci. Res.">
        <title>Regulation and subcellular localization of the microtubule-destabilizing stathmin family phosphoproteins in cortical neurons.</title>
        <authorList>
            <person name="Gavet O."/>
            <person name="El Messari S."/>
            <person name="Ozon S."/>
            <person name="Sobel A."/>
        </authorList>
    </citation>
    <scope>FUNCTION</scope>
    <scope>SUBCELLULAR LOCATION</scope>
</reference>
<reference key="4">
    <citation type="journal article" date="2012" name="Nat. Commun.">
        <title>Quantitative maps of protein phosphorylation sites across 14 different rat organs and tissues.</title>
        <authorList>
            <person name="Lundby A."/>
            <person name="Secher A."/>
            <person name="Lage K."/>
            <person name="Nordsborg N.B."/>
            <person name="Dmytriyev A."/>
            <person name="Lundby C."/>
            <person name="Olsen J.V."/>
        </authorList>
    </citation>
    <scope>PHOSPHORYLATION [LARGE SCALE ANALYSIS] AT SER-90</scope>
    <scope>PHOSPHORYLATION [LARGE SCALE ANALYSIS] AT SER-54 (ISOFORM 3)</scope>
    <scope>IDENTIFICATION BY MASS SPECTROMETRY [LARGE SCALE ANALYSIS]</scope>
</reference>
<reference key="5">
    <citation type="journal article" date="2004" name="Nature">
        <title>Insight into tubulin regulation from a complex with colchicine and a stathmin-like domain.</title>
        <authorList>
            <person name="Ravelli R.B."/>
            <person name="Gigant B."/>
            <person name="Curmi P.A."/>
            <person name="Jourdain I."/>
            <person name="Lachkar S."/>
            <person name="Sobel A."/>
            <person name="Knossow M."/>
        </authorList>
    </citation>
    <scope>X-RAY CRYSTALLOGRAPHY (3.58 ANGSTROMS) OF 49-189 IN COMPLEX WITH TUBULIN HETERODIMER</scope>
    <scope>FUNCTION</scope>
</reference>
<protein>
    <recommendedName>
        <fullName>Stathmin-4</fullName>
    </recommendedName>
    <alternativeName>
        <fullName>Stathmin-like protein B3</fullName>
        <shortName>RB3</shortName>
    </alternativeName>
</protein>
<organism>
    <name type="scientific">Rattus norvegicus</name>
    <name type="common">Rat</name>
    <dbReference type="NCBI Taxonomy" id="10116"/>
    <lineage>
        <taxon>Eukaryota</taxon>
        <taxon>Metazoa</taxon>
        <taxon>Chordata</taxon>
        <taxon>Craniata</taxon>
        <taxon>Vertebrata</taxon>
        <taxon>Euteleostomi</taxon>
        <taxon>Mammalia</taxon>
        <taxon>Eutheria</taxon>
        <taxon>Euarchontoglires</taxon>
        <taxon>Glires</taxon>
        <taxon>Rodentia</taxon>
        <taxon>Myomorpha</taxon>
        <taxon>Muroidea</taxon>
        <taxon>Muridae</taxon>
        <taxon>Murinae</taxon>
        <taxon>Rattus</taxon>
    </lineage>
</organism>
<accession>P63043</accession>
<accession>O35414</accession>
<accession>O35415</accession>
<accession>O35416</accession>
<feature type="chain" id="PRO_0000182408" description="Stathmin-4">
    <location>
        <begin position="1"/>
        <end position="189"/>
    </location>
</feature>
<feature type="domain" description="SLD" evidence="3">
    <location>
        <begin position="48"/>
        <end position="189"/>
    </location>
</feature>
<feature type="region of interest" description="Disordered" evidence="4">
    <location>
        <begin position="168"/>
        <end position="189"/>
    </location>
</feature>
<feature type="coiled-coil region" evidence="2">
    <location>
        <begin position="90"/>
        <end position="189"/>
    </location>
</feature>
<feature type="modified residue" description="Phosphoserine" evidence="11">
    <location>
        <position position="90"/>
    </location>
</feature>
<feature type="lipid moiety-binding region" description="S-palmitoyl cysteine" evidence="1">
    <location>
        <position position="20"/>
    </location>
</feature>
<feature type="lipid moiety-binding region" description="S-palmitoyl cysteine" evidence="1">
    <location>
        <position position="22"/>
    </location>
</feature>
<feature type="splice variant" id="VSP_006280" description="In isoform 3." evidence="9">
    <original>E</original>
    <variation>EGWCGRQCRRKGQSQRKGSADWRERREQ</variation>
    <location>
        <position position="36"/>
    </location>
</feature>
<feature type="splice variant" id="VSP_006281" description="In isoform 2." evidence="9">
    <original>DKHAEEVRKNKELKEEASR</original>
    <variation>EPPAAR</variation>
    <location>
        <begin position="171"/>
        <end position="189"/>
    </location>
</feature>
<feature type="strand" evidence="12">
    <location>
        <begin position="51"/>
        <end position="58"/>
    </location>
</feature>
<feature type="strand" evidence="12">
    <location>
        <begin position="61"/>
        <end position="69"/>
    </location>
</feature>
<feature type="strand" evidence="14">
    <location>
        <begin position="72"/>
        <end position="75"/>
    </location>
</feature>
<feature type="helix" evidence="12">
    <location>
        <begin position="91"/>
        <end position="184"/>
    </location>
</feature>
<feature type="strand" evidence="13">
    <location>
        <begin position="185"/>
        <end position="187"/>
    </location>
</feature>
<feature type="modified residue" description="Phosphoserine" evidence="11">
    <location sequence="P63043-3">
        <position position="54"/>
    </location>
</feature>
<sequence>MTLAAYKEKMKELPLVSLFCSCFLSDPLNKSSYKYEADTVDLNWCVISDMEVIELNKCTSGQSFEVILKPPSFDGVPEFNASLPRRRDPSLEEIQKKLEAAEERRKYQEAELLKHLAEKREHEREVIQKAIEENNNFIKMAKEKLAQKMESNKENREAHLAAMLERLQEKDKHAEEVRKNKELKEEASR</sequence>
<dbReference type="EMBL" id="AF026528">
    <property type="protein sequence ID" value="AAC95061.1"/>
    <property type="molecule type" value="mRNA"/>
</dbReference>
<dbReference type="EMBL" id="AF026529">
    <property type="protein sequence ID" value="AAC95062.1"/>
    <property type="molecule type" value="mRNA"/>
</dbReference>
<dbReference type="EMBL" id="AF026530">
    <property type="protein sequence ID" value="AAC95063.1"/>
    <property type="molecule type" value="mRNA"/>
</dbReference>
<dbReference type="RefSeq" id="NP_001257785.1">
    <molecule id="P63043-1"/>
    <property type="nucleotide sequence ID" value="NM_001270856.1"/>
</dbReference>
<dbReference type="RefSeq" id="NP_001257787.1">
    <molecule id="P63043-2"/>
    <property type="nucleotide sequence ID" value="NM_001270858.1"/>
</dbReference>
<dbReference type="RefSeq" id="NP_062049.1">
    <molecule id="P63043-3"/>
    <property type="nucleotide sequence ID" value="NM_019176.2"/>
</dbReference>
<dbReference type="RefSeq" id="XP_006252213.1">
    <property type="nucleotide sequence ID" value="XM_006252151.3"/>
</dbReference>
<dbReference type="RefSeq" id="XP_038949605.1">
    <molecule id="P63043-3"/>
    <property type="nucleotide sequence ID" value="XM_039093677.2"/>
</dbReference>
<dbReference type="RefSeq" id="XP_063130748.1">
    <molecule id="P63043-3"/>
    <property type="nucleotide sequence ID" value="XM_063274678.1"/>
</dbReference>
<dbReference type="RefSeq" id="XP_063130749.1">
    <molecule id="P63043-3"/>
    <property type="nucleotide sequence ID" value="XM_063274679.1"/>
</dbReference>
<dbReference type="RefSeq" id="XP_063130750.1">
    <molecule id="P63043-3"/>
    <property type="nucleotide sequence ID" value="XM_063274680.1"/>
</dbReference>
<dbReference type="RefSeq" id="XP_063130752.1">
    <molecule id="P63043-1"/>
    <property type="nucleotide sequence ID" value="XM_063274682.1"/>
</dbReference>
<dbReference type="RefSeq" id="XP_063130753.1">
    <molecule id="P63043-1"/>
    <property type="nucleotide sequence ID" value="XM_063274683.1"/>
</dbReference>
<dbReference type="RefSeq" id="XP_063130754.1">
    <molecule id="P63043-1"/>
    <property type="nucleotide sequence ID" value="XM_063274684.1"/>
</dbReference>
<dbReference type="RefSeq" id="XP_063130755.1">
    <molecule id="P63043-1"/>
    <property type="nucleotide sequence ID" value="XM_063274685.1"/>
</dbReference>
<dbReference type="PDB" id="1SA0">
    <property type="method" value="X-ray"/>
    <property type="resolution" value="3.58 A"/>
    <property type="chains" value="E=49-189"/>
</dbReference>
<dbReference type="PDB" id="1SA1">
    <property type="method" value="X-ray"/>
    <property type="resolution" value="4.20 A"/>
    <property type="chains" value="E=49-189"/>
</dbReference>
<dbReference type="PDB" id="1Z2B">
    <property type="method" value="X-ray"/>
    <property type="resolution" value="4.10 A"/>
    <property type="chains" value="E=49-189"/>
</dbReference>
<dbReference type="PDB" id="3DU7">
    <property type="method" value="X-ray"/>
    <property type="resolution" value="4.10 A"/>
    <property type="chains" value="E=49-189"/>
</dbReference>
<dbReference type="PDB" id="3E22">
    <property type="method" value="X-ray"/>
    <property type="resolution" value="3.80 A"/>
    <property type="chains" value="E=49-189"/>
</dbReference>
<dbReference type="PDB" id="3HKB">
    <property type="method" value="X-ray"/>
    <property type="resolution" value="3.65 A"/>
    <property type="chains" value="E=49-189"/>
</dbReference>
<dbReference type="PDB" id="3HKC">
    <property type="method" value="X-ray"/>
    <property type="resolution" value="3.80 A"/>
    <property type="chains" value="E=49-189"/>
</dbReference>
<dbReference type="PDB" id="3HKD">
    <property type="method" value="X-ray"/>
    <property type="resolution" value="3.70 A"/>
    <property type="chains" value="E=49-189"/>
</dbReference>
<dbReference type="PDB" id="3HKE">
    <property type="method" value="X-ray"/>
    <property type="resolution" value="3.60 A"/>
    <property type="chains" value="E=49-189"/>
</dbReference>
<dbReference type="PDB" id="3N2G">
    <property type="method" value="X-ray"/>
    <property type="resolution" value="4.00 A"/>
    <property type="chains" value="E=49-189"/>
</dbReference>
<dbReference type="PDB" id="3N2K">
    <property type="method" value="X-ray"/>
    <property type="resolution" value="4.00 A"/>
    <property type="chains" value="E=49-189"/>
</dbReference>
<dbReference type="PDB" id="3RYC">
    <property type="method" value="X-ray"/>
    <property type="resolution" value="2.10 A"/>
    <property type="chains" value="E=49-189"/>
</dbReference>
<dbReference type="PDB" id="3RYF">
    <property type="method" value="X-ray"/>
    <property type="resolution" value="2.52 A"/>
    <property type="chains" value="E=49-189"/>
</dbReference>
<dbReference type="PDB" id="3RYH">
    <property type="method" value="X-ray"/>
    <property type="resolution" value="2.80 A"/>
    <property type="chains" value="E=49-189"/>
</dbReference>
<dbReference type="PDB" id="3RYI">
    <property type="method" value="X-ray"/>
    <property type="resolution" value="2.40 A"/>
    <property type="chains" value="E=49-189"/>
</dbReference>
<dbReference type="PDB" id="3UT5">
    <property type="method" value="X-ray"/>
    <property type="resolution" value="2.73 A"/>
    <property type="chains" value="E=49-189"/>
</dbReference>
<dbReference type="PDB" id="4EB6">
    <property type="method" value="X-ray"/>
    <property type="resolution" value="3.47 A"/>
    <property type="chains" value="E=49-189"/>
</dbReference>
<dbReference type="PDB" id="4I4T">
    <property type="method" value="X-ray"/>
    <property type="resolution" value="1.80 A"/>
    <property type="chains" value="E=49-189"/>
</dbReference>
<dbReference type="PDB" id="4I50">
    <property type="method" value="X-ray"/>
    <property type="resolution" value="2.30 A"/>
    <property type="chains" value="E=49-189"/>
</dbReference>
<dbReference type="PDB" id="4I55">
    <property type="method" value="X-ray"/>
    <property type="resolution" value="2.20 A"/>
    <property type="chains" value="E=49-189"/>
</dbReference>
<dbReference type="PDB" id="4IHJ">
    <property type="method" value="X-ray"/>
    <property type="resolution" value="2.00 A"/>
    <property type="chains" value="E=49-189"/>
</dbReference>
<dbReference type="PDB" id="4IIJ">
    <property type="method" value="X-ray"/>
    <property type="resolution" value="2.60 A"/>
    <property type="chains" value="E=49-189"/>
</dbReference>
<dbReference type="PDB" id="4O2A">
    <property type="method" value="X-ray"/>
    <property type="resolution" value="2.50 A"/>
    <property type="chains" value="E=49-189"/>
</dbReference>
<dbReference type="PDB" id="4O2B">
    <property type="method" value="X-ray"/>
    <property type="resolution" value="2.30 A"/>
    <property type="chains" value="E=49-189"/>
</dbReference>
<dbReference type="PDB" id="4O4H">
    <property type="method" value="X-ray"/>
    <property type="resolution" value="2.10 A"/>
    <property type="chains" value="E=49-189"/>
</dbReference>
<dbReference type="PDB" id="4O4I">
    <property type="method" value="X-ray"/>
    <property type="resolution" value="2.40 A"/>
    <property type="chains" value="E=49-189"/>
</dbReference>
<dbReference type="PDB" id="4O4J">
    <property type="method" value="X-ray"/>
    <property type="resolution" value="2.20 A"/>
    <property type="chains" value="E=49-189"/>
</dbReference>
<dbReference type="PDB" id="4O4L">
    <property type="method" value="X-ray"/>
    <property type="resolution" value="2.20 A"/>
    <property type="chains" value="E=49-189"/>
</dbReference>
<dbReference type="PDB" id="4TUY">
    <property type="method" value="X-ray"/>
    <property type="resolution" value="2.10 A"/>
    <property type="chains" value="E=49-189"/>
</dbReference>
<dbReference type="PDB" id="4TV8">
    <property type="method" value="X-ray"/>
    <property type="resolution" value="2.10 A"/>
    <property type="chains" value="E=49-189"/>
</dbReference>
<dbReference type="PDB" id="4TV9">
    <property type="method" value="X-ray"/>
    <property type="resolution" value="2.00 A"/>
    <property type="chains" value="E=49-189"/>
</dbReference>
<dbReference type="PDB" id="4X1I">
    <property type="method" value="X-ray"/>
    <property type="resolution" value="3.11 A"/>
    <property type="chains" value="E=49-189"/>
</dbReference>
<dbReference type="PDB" id="4X1K">
    <property type="method" value="X-ray"/>
    <property type="resolution" value="3.50 A"/>
    <property type="chains" value="E=49-189"/>
</dbReference>
<dbReference type="PDB" id="4X1Y">
    <property type="method" value="X-ray"/>
    <property type="resolution" value="3.19 A"/>
    <property type="chains" value="E=49-189"/>
</dbReference>
<dbReference type="PDB" id="4X20">
    <property type="method" value="X-ray"/>
    <property type="resolution" value="3.50 A"/>
    <property type="chains" value="E=49-189"/>
</dbReference>
<dbReference type="PDB" id="4YJ2">
    <property type="method" value="X-ray"/>
    <property type="resolution" value="2.60 A"/>
    <property type="chains" value="E=49-189"/>
</dbReference>
<dbReference type="PDB" id="4YJ3">
    <property type="method" value="X-ray"/>
    <property type="resolution" value="3.75 A"/>
    <property type="chains" value="E=49-189"/>
</dbReference>
<dbReference type="PDB" id="4ZHQ">
    <property type="method" value="X-ray"/>
    <property type="resolution" value="2.55 A"/>
    <property type="chains" value="E=49-189"/>
</dbReference>
<dbReference type="PDB" id="4ZI7">
    <property type="method" value="X-ray"/>
    <property type="resolution" value="2.51 A"/>
    <property type="chains" value="E=49-189"/>
</dbReference>
<dbReference type="PDB" id="4ZOL">
    <property type="method" value="X-ray"/>
    <property type="resolution" value="2.50 A"/>
    <property type="chains" value="E=49-189"/>
</dbReference>
<dbReference type="PDB" id="5BMV">
    <property type="method" value="X-ray"/>
    <property type="resolution" value="2.50 A"/>
    <property type="chains" value="E=49-189"/>
</dbReference>
<dbReference type="PDB" id="5C8Y">
    <property type="method" value="X-ray"/>
    <property type="resolution" value="2.59 A"/>
    <property type="chains" value="E=49-189"/>
</dbReference>
<dbReference type="PDB" id="5CA0">
    <property type="method" value="X-ray"/>
    <property type="resolution" value="2.50 A"/>
    <property type="chains" value="E=49-189"/>
</dbReference>
<dbReference type="PDB" id="5CA1">
    <property type="method" value="X-ray"/>
    <property type="resolution" value="2.40 A"/>
    <property type="chains" value="E=49-189"/>
</dbReference>
<dbReference type="PDB" id="5CB4">
    <property type="method" value="X-ray"/>
    <property type="resolution" value="2.19 A"/>
    <property type="chains" value="E=49-189"/>
</dbReference>
<dbReference type="PDB" id="5EZY">
    <property type="method" value="X-ray"/>
    <property type="resolution" value="2.05 A"/>
    <property type="chains" value="E=49-189"/>
</dbReference>
<dbReference type="PDB" id="5FNV">
    <property type="method" value="X-ray"/>
    <property type="resolution" value="2.61 A"/>
    <property type="chains" value="E=49-189"/>
</dbReference>
<dbReference type="PDB" id="5GON">
    <property type="method" value="X-ray"/>
    <property type="resolution" value="2.48 A"/>
    <property type="chains" value="E=50-185"/>
</dbReference>
<dbReference type="PDB" id="5H74">
    <property type="method" value="X-ray"/>
    <property type="resolution" value="2.60 A"/>
    <property type="chains" value="E=49-189"/>
</dbReference>
<dbReference type="PDB" id="5H7O">
    <property type="method" value="X-ray"/>
    <property type="resolution" value="2.80 A"/>
    <property type="chains" value="E=49-189"/>
</dbReference>
<dbReference type="PDB" id="5IYZ">
    <property type="method" value="X-ray"/>
    <property type="resolution" value="1.80 A"/>
    <property type="chains" value="E=49-189"/>
</dbReference>
<dbReference type="PDB" id="5J2T">
    <property type="method" value="X-ray"/>
    <property type="resolution" value="2.20 A"/>
    <property type="chains" value="E=49-189"/>
</dbReference>
<dbReference type="PDB" id="5J2U">
    <property type="method" value="X-ray"/>
    <property type="resolution" value="2.50 A"/>
    <property type="chains" value="E=49-189"/>
</dbReference>
<dbReference type="PDB" id="5JH7">
    <property type="method" value="X-ray"/>
    <property type="resolution" value="2.25 A"/>
    <property type="chains" value="E=49-189"/>
</dbReference>
<dbReference type="PDB" id="5JQG">
    <property type="method" value="X-ray"/>
    <property type="resolution" value="2.24 A"/>
    <property type="chains" value="E=49-189"/>
</dbReference>
<dbReference type="PDB" id="5JVD">
    <property type="method" value="X-ray"/>
    <property type="resolution" value="2.39 A"/>
    <property type="chains" value="E=49-189"/>
</dbReference>
<dbReference type="PDB" id="5KX5">
    <property type="method" value="X-ray"/>
    <property type="resolution" value="2.50 A"/>
    <property type="chains" value="E=49-189"/>
</dbReference>
<dbReference type="PDB" id="5LA6">
    <property type="method" value="X-ray"/>
    <property type="resolution" value="2.10 A"/>
    <property type="chains" value="E=49-189"/>
</dbReference>
<dbReference type="PDB" id="5LOV">
    <property type="method" value="X-ray"/>
    <property type="resolution" value="2.40 A"/>
    <property type="chains" value="E=49-189"/>
</dbReference>
<dbReference type="PDB" id="5LP6">
    <property type="method" value="X-ray"/>
    <property type="resolution" value="2.90 A"/>
    <property type="chains" value="E=49-189"/>
</dbReference>
<dbReference type="PDB" id="5LXS">
    <property type="method" value="X-ray"/>
    <property type="resolution" value="2.20 A"/>
    <property type="chains" value="E=49-189"/>
</dbReference>
<dbReference type="PDB" id="5LXT">
    <property type="method" value="X-ray"/>
    <property type="resolution" value="1.90 A"/>
    <property type="chains" value="E=49-189"/>
</dbReference>
<dbReference type="PDB" id="5LYJ">
    <property type="method" value="X-ray"/>
    <property type="resolution" value="2.40 A"/>
    <property type="chains" value="E=49-189"/>
</dbReference>
<dbReference type="PDB" id="5M7E">
    <property type="method" value="X-ray"/>
    <property type="resolution" value="2.05 A"/>
    <property type="chains" value="E=49-189"/>
</dbReference>
<dbReference type="PDB" id="5M7G">
    <property type="method" value="X-ray"/>
    <property type="resolution" value="2.25 A"/>
    <property type="chains" value="E=49-189"/>
</dbReference>
<dbReference type="PDB" id="5M8D">
    <property type="method" value="X-ray"/>
    <property type="resolution" value="2.25 A"/>
    <property type="chains" value="E=49-189"/>
</dbReference>
<dbReference type="PDB" id="5M8G">
    <property type="method" value="X-ray"/>
    <property type="resolution" value="2.15 A"/>
    <property type="chains" value="E=49-189"/>
</dbReference>
<dbReference type="PDB" id="5MF4">
    <property type="method" value="X-ray"/>
    <property type="resolution" value="2.30 A"/>
    <property type="chains" value="E=49-189"/>
</dbReference>
<dbReference type="PDB" id="5NFZ">
    <property type="method" value="X-ray"/>
    <property type="resolution" value="2.10 A"/>
    <property type="chains" value="E=49-189"/>
</dbReference>
<dbReference type="PDB" id="5NG1">
    <property type="method" value="X-ray"/>
    <property type="resolution" value="2.20 A"/>
    <property type="chains" value="E=49-189"/>
</dbReference>
<dbReference type="PDB" id="5NJH">
    <property type="method" value="X-ray"/>
    <property type="resolution" value="2.39 A"/>
    <property type="chains" value="E=47-189"/>
</dbReference>
<dbReference type="PDB" id="5O7A">
    <property type="method" value="X-ray"/>
    <property type="resolution" value="2.50 A"/>
    <property type="chains" value="E=49-189"/>
</dbReference>
<dbReference type="PDB" id="5OSK">
    <property type="method" value="X-ray"/>
    <property type="resolution" value="2.11 A"/>
    <property type="chains" value="E=49-189"/>
</dbReference>
<dbReference type="PDB" id="5OV7">
    <property type="method" value="X-ray"/>
    <property type="resolution" value="2.40 A"/>
    <property type="chains" value="E=49-189"/>
</dbReference>
<dbReference type="PDB" id="5S4L">
    <property type="method" value="X-ray"/>
    <property type="resolution" value="2.30 A"/>
    <property type="chains" value="E=49-189"/>
</dbReference>
<dbReference type="PDB" id="5S4M">
    <property type="method" value="X-ray"/>
    <property type="resolution" value="2.15 A"/>
    <property type="chains" value="E=49-189"/>
</dbReference>
<dbReference type="PDB" id="5S4N">
    <property type="method" value="X-ray"/>
    <property type="resolution" value="2.53 A"/>
    <property type="chains" value="E=49-189"/>
</dbReference>
<dbReference type="PDB" id="5S4O">
    <property type="method" value="X-ray"/>
    <property type="resolution" value="2.30 A"/>
    <property type="chains" value="E=49-189"/>
</dbReference>
<dbReference type="PDB" id="5S4P">
    <property type="method" value="X-ray"/>
    <property type="resolution" value="2.29 A"/>
    <property type="chains" value="E=49-189"/>
</dbReference>
<dbReference type="PDB" id="5S4Q">
    <property type="method" value="X-ray"/>
    <property type="resolution" value="2.59 A"/>
    <property type="chains" value="E=49-189"/>
</dbReference>
<dbReference type="PDB" id="5S4R">
    <property type="method" value="X-ray"/>
    <property type="resolution" value="2.35 A"/>
    <property type="chains" value="E=49-189"/>
</dbReference>
<dbReference type="PDB" id="5S4S">
    <property type="method" value="X-ray"/>
    <property type="resolution" value="2.35 A"/>
    <property type="chains" value="E=49-189"/>
</dbReference>
<dbReference type="PDB" id="5S4T">
    <property type="method" value="X-ray"/>
    <property type="resolution" value="2.27 A"/>
    <property type="chains" value="E=49-189"/>
</dbReference>
<dbReference type="PDB" id="5S4U">
    <property type="method" value="X-ray"/>
    <property type="resolution" value="2.39 A"/>
    <property type="chains" value="E=49-189"/>
</dbReference>
<dbReference type="PDB" id="5S4V">
    <property type="method" value="X-ray"/>
    <property type="resolution" value="2.30 A"/>
    <property type="chains" value="E=49-189"/>
</dbReference>
<dbReference type="PDB" id="5S4W">
    <property type="method" value="X-ray"/>
    <property type="resolution" value="2.80 A"/>
    <property type="chains" value="E=49-189"/>
</dbReference>
<dbReference type="PDB" id="5S4X">
    <property type="method" value="X-ray"/>
    <property type="resolution" value="2.53 A"/>
    <property type="chains" value="E=49-189"/>
</dbReference>
<dbReference type="PDB" id="5S4Y">
    <property type="method" value="X-ray"/>
    <property type="resolution" value="2.30 A"/>
    <property type="chains" value="E=49-189"/>
</dbReference>
<dbReference type="PDB" id="5S4Z">
    <property type="method" value="X-ray"/>
    <property type="resolution" value="2.10 A"/>
    <property type="chains" value="E=49-189"/>
</dbReference>
<dbReference type="PDB" id="5S50">
    <property type="method" value="X-ray"/>
    <property type="resolution" value="3.10 A"/>
    <property type="chains" value="E=49-189"/>
</dbReference>
<dbReference type="PDB" id="5S51">
    <property type="method" value="X-ray"/>
    <property type="resolution" value="2.40 A"/>
    <property type="chains" value="E=49-189"/>
</dbReference>
<dbReference type="PDB" id="5S52">
    <property type="method" value="X-ray"/>
    <property type="resolution" value="2.83 A"/>
    <property type="chains" value="E=49-189"/>
</dbReference>
<dbReference type="PDB" id="5S53">
    <property type="method" value="X-ray"/>
    <property type="resolution" value="2.75 A"/>
    <property type="chains" value="E=49-189"/>
</dbReference>
<dbReference type="PDB" id="5S54">
    <property type="method" value="X-ray"/>
    <property type="resolution" value="2.40 A"/>
    <property type="chains" value="E=49-189"/>
</dbReference>
<dbReference type="PDB" id="5S55">
    <property type="method" value="X-ray"/>
    <property type="resolution" value="2.30 A"/>
    <property type="chains" value="E=49-189"/>
</dbReference>
<dbReference type="PDB" id="5S56">
    <property type="method" value="X-ray"/>
    <property type="resolution" value="2.25 A"/>
    <property type="chains" value="E=49-189"/>
</dbReference>
<dbReference type="PDB" id="5S57">
    <property type="method" value="X-ray"/>
    <property type="resolution" value="2.45 A"/>
    <property type="chains" value="E=49-189"/>
</dbReference>
<dbReference type="PDB" id="5S58">
    <property type="method" value="X-ray"/>
    <property type="resolution" value="2.30 A"/>
    <property type="chains" value="E=49-189"/>
</dbReference>
<dbReference type="PDB" id="5S59">
    <property type="method" value="X-ray"/>
    <property type="resolution" value="2.60 A"/>
    <property type="chains" value="E=49-189"/>
</dbReference>
<dbReference type="PDB" id="5S5A">
    <property type="method" value="X-ray"/>
    <property type="resolution" value="2.35 A"/>
    <property type="chains" value="E=49-189"/>
</dbReference>
<dbReference type="PDB" id="5S5B">
    <property type="method" value="X-ray"/>
    <property type="resolution" value="2.30 A"/>
    <property type="chains" value="E=49-189"/>
</dbReference>
<dbReference type="PDB" id="5S5C">
    <property type="method" value="X-ray"/>
    <property type="resolution" value="2.40 A"/>
    <property type="chains" value="E=49-189"/>
</dbReference>
<dbReference type="PDB" id="5S5D">
    <property type="method" value="X-ray"/>
    <property type="resolution" value="1.90 A"/>
    <property type="chains" value="E=49-189"/>
</dbReference>
<dbReference type="PDB" id="5S5E">
    <property type="method" value="X-ray"/>
    <property type="resolution" value="2.67 A"/>
    <property type="chains" value="E=49-189"/>
</dbReference>
<dbReference type="PDB" id="5S5F">
    <property type="method" value="X-ray"/>
    <property type="resolution" value="2.24 A"/>
    <property type="chains" value="E=49-189"/>
</dbReference>
<dbReference type="PDB" id="5S5G">
    <property type="method" value="X-ray"/>
    <property type="resolution" value="2.69 A"/>
    <property type="chains" value="E=49-189"/>
</dbReference>
<dbReference type="PDB" id="5S5H">
    <property type="method" value="X-ray"/>
    <property type="resolution" value="2.50 A"/>
    <property type="chains" value="E=49-189"/>
</dbReference>
<dbReference type="PDB" id="5S5I">
    <property type="method" value="X-ray"/>
    <property type="resolution" value="2.49 A"/>
    <property type="chains" value="E=49-189"/>
</dbReference>
<dbReference type="PDB" id="5S5J">
    <property type="method" value="X-ray"/>
    <property type="resolution" value="2.25 A"/>
    <property type="chains" value="E=49-189"/>
</dbReference>
<dbReference type="PDB" id="5S5K">
    <property type="method" value="X-ray"/>
    <property type="resolution" value="2.41 A"/>
    <property type="chains" value="E=49-189"/>
</dbReference>
<dbReference type="PDB" id="5S5L">
    <property type="method" value="X-ray"/>
    <property type="resolution" value="2.25 A"/>
    <property type="chains" value="E=49-189"/>
</dbReference>
<dbReference type="PDB" id="5S5M">
    <property type="method" value="X-ray"/>
    <property type="resolution" value="2.70 A"/>
    <property type="chains" value="E=49-189"/>
</dbReference>
<dbReference type="PDB" id="5S5N">
    <property type="method" value="X-ray"/>
    <property type="resolution" value="2.90 A"/>
    <property type="chains" value="E=49-189"/>
</dbReference>
<dbReference type="PDB" id="5S5O">
    <property type="method" value="X-ray"/>
    <property type="resolution" value="2.30 A"/>
    <property type="chains" value="E=49-189"/>
</dbReference>
<dbReference type="PDB" id="5S5P">
    <property type="method" value="X-ray"/>
    <property type="resolution" value="2.79 A"/>
    <property type="chains" value="E=49-189"/>
</dbReference>
<dbReference type="PDB" id="5S5Q">
    <property type="method" value="X-ray"/>
    <property type="resolution" value="2.05 A"/>
    <property type="chains" value="E=49-189"/>
</dbReference>
<dbReference type="PDB" id="5S5R">
    <property type="method" value="X-ray"/>
    <property type="resolution" value="2.30 A"/>
    <property type="chains" value="E=49-189"/>
</dbReference>
<dbReference type="PDB" id="5S5S">
    <property type="method" value="X-ray"/>
    <property type="resolution" value="2.36 A"/>
    <property type="chains" value="E=49-189"/>
</dbReference>
<dbReference type="PDB" id="5S5T">
    <property type="method" value="X-ray"/>
    <property type="resolution" value="2.53 A"/>
    <property type="chains" value="E=49-189"/>
</dbReference>
<dbReference type="PDB" id="5S5U">
    <property type="method" value="X-ray"/>
    <property type="resolution" value="2.50 A"/>
    <property type="chains" value="E=49-189"/>
</dbReference>
<dbReference type="PDB" id="5S5V">
    <property type="method" value="X-ray"/>
    <property type="resolution" value="2.70 A"/>
    <property type="chains" value="E=49-189"/>
</dbReference>
<dbReference type="PDB" id="5S5W">
    <property type="method" value="X-ray"/>
    <property type="resolution" value="2.35 A"/>
    <property type="chains" value="E=49-189"/>
</dbReference>
<dbReference type="PDB" id="5S5X">
    <property type="method" value="X-ray"/>
    <property type="resolution" value="2.32 A"/>
    <property type="chains" value="E=49-189"/>
</dbReference>
<dbReference type="PDB" id="5S5Y">
    <property type="method" value="X-ray"/>
    <property type="resolution" value="2.26 A"/>
    <property type="chains" value="E=49-189"/>
</dbReference>
<dbReference type="PDB" id="5S5Z">
    <property type="method" value="X-ray"/>
    <property type="resolution" value="2.55 A"/>
    <property type="chains" value="E=49-189"/>
</dbReference>
<dbReference type="PDB" id="5S60">
    <property type="method" value="X-ray"/>
    <property type="resolution" value="2.30 A"/>
    <property type="chains" value="E=49-189"/>
</dbReference>
<dbReference type="PDB" id="5S61">
    <property type="method" value="X-ray"/>
    <property type="resolution" value="1.95 A"/>
    <property type="chains" value="E=49-189"/>
</dbReference>
<dbReference type="PDB" id="5S62">
    <property type="method" value="X-ray"/>
    <property type="resolution" value="2.75 A"/>
    <property type="chains" value="E=49-189"/>
</dbReference>
<dbReference type="PDB" id="5S63">
    <property type="method" value="X-ray"/>
    <property type="resolution" value="2.60 A"/>
    <property type="chains" value="E=49-189"/>
</dbReference>
<dbReference type="PDB" id="5S64">
    <property type="method" value="X-ray"/>
    <property type="resolution" value="2.75 A"/>
    <property type="chains" value="E=49-189"/>
</dbReference>
<dbReference type="PDB" id="5S65">
    <property type="method" value="X-ray"/>
    <property type="resolution" value="2.25 A"/>
    <property type="chains" value="E=49-189"/>
</dbReference>
<dbReference type="PDB" id="5S66">
    <property type="method" value="X-ray"/>
    <property type="resolution" value="2.10 A"/>
    <property type="chains" value="E=49-189"/>
</dbReference>
<dbReference type="PDB" id="5S67">
    <property type="method" value="X-ray"/>
    <property type="resolution" value="2.10 A"/>
    <property type="chains" value="E=49-189"/>
</dbReference>
<dbReference type="PDB" id="5SB3">
    <property type="method" value="X-ray"/>
    <property type="resolution" value="2.20 A"/>
    <property type="chains" value="E=49-189"/>
</dbReference>
<dbReference type="PDB" id="5SB4">
    <property type="method" value="X-ray"/>
    <property type="resolution" value="2.50 A"/>
    <property type="chains" value="E=49-189"/>
</dbReference>
<dbReference type="PDB" id="5SB5">
    <property type="method" value="X-ray"/>
    <property type="resolution" value="2.31 A"/>
    <property type="chains" value="E=49-189"/>
</dbReference>
<dbReference type="PDB" id="5SB6">
    <property type="method" value="X-ray"/>
    <property type="resolution" value="2.30 A"/>
    <property type="chains" value="E=49-189"/>
</dbReference>
<dbReference type="PDB" id="5SB7">
    <property type="method" value="X-ray"/>
    <property type="resolution" value="2.10 A"/>
    <property type="chains" value="E=49-189"/>
</dbReference>
<dbReference type="PDB" id="5SB8">
    <property type="method" value="X-ray"/>
    <property type="resolution" value="2.30 A"/>
    <property type="chains" value="E=49-189"/>
</dbReference>
<dbReference type="PDB" id="5SB9">
    <property type="method" value="X-ray"/>
    <property type="resolution" value="2.50 A"/>
    <property type="chains" value="E=49-189"/>
</dbReference>
<dbReference type="PDB" id="5SBA">
    <property type="method" value="X-ray"/>
    <property type="resolution" value="2.25 A"/>
    <property type="chains" value="E=49-189"/>
</dbReference>
<dbReference type="PDB" id="5SBB">
    <property type="method" value="X-ray"/>
    <property type="resolution" value="2.25 A"/>
    <property type="chains" value="E=49-189"/>
</dbReference>
<dbReference type="PDB" id="5SBC">
    <property type="method" value="X-ray"/>
    <property type="resolution" value="2.32 A"/>
    <property type="chains" value="E=49-189"/>
</dbReference>
<dbReference type="PDB" id="5SBD">
    <property type="method" value="X-ray"/>
    <property type="resolution" value="2.25 A"/>
    <property type="chains" value="E=49-189"/>
</dbReference>
<dbReference type="PDB" id="5SBE">
    <property type="method" value="X-ray"/>
    <property type="resolution" value="2.75 A"/>
    <property type="chains" value="E=49-189"/>
</dbReference>
<dbReference type="PDB" id="5XAF">
    <property type="method" value="X-ray"/>
    <property type="resolution" value="2.55 A"/>
    <property type="chains" value="E=1-189"/>
</dbReference>
<dbReference type="PDB" id="5XAG">
    <property type="method" value="X-ray"/>
    <property type="resolution" value="2.56 A"/>
    <property type="chains" value="E=1-189"/>
</dbReference>
<dbReference type="PDB" id="5XHC">
    <property type="method" value="X-ray"/>
    <property type="resolution" value="2.75 A"/>
    <property type="chains" value="E=6-189"/>
</dbReference>
<dbReference type="PDB" id="5XI5">
    <property type="method" value="X-ray"/>
    <property type="resolution" value="2.81 A"/>
    <property type="chains" value="E=6-189"/>
</dbReference>
<dbReference type="PDB" id="5XI7">
    <property type="method" value="X-ray"/>
    <property type="resolution" value="2.99 A"/>
    <property type="chains" value="E=6-189"/>
</dbReference>
<dbReference type="PDB" id="5XIW">
    <property type="method" value="X-ray"/>
    <property type="resolution" value="2.90 A"/>
    <property type="chains" value="E=49-189"/>
</dbReference>
<dbReference type="PDB" id="5XKE">
    <property type="method" value="X-ray"/>
    <property type="resolution" value="2.60 A"/>
    <property type="chains" value="E=49-189"/>
</dbReference>
<dbReference type="PDB" id="5XKF">
    <property type="method" value="X-ray"/>
    <property type="resolution" value="2.80 A"/>
    <property type="chains" value="E=49-189"/>
</dbReference>
<dbReference type="PDB" id="5XKG">
    <property type="method" value="X-ray"/>
    <property type="resolution" value="2.20 A"/>
    <property type="chains" value="E=49-189"/>
</dbReference>
<dbReference type="PDB" id="5XKH">
    <property type="method" value="X-ray"/>
    <property type="resolution" value="2.25 A"/>
    <property type="chains" value="E=49-189"/>
</dbReference>
<dbReference type="PDB" id="5XLT">
    <property type="method" value="X-ray"/>
    <property type="resolution" value="2.81 A"/>
    <property type="chains" value="E=49-189"/>
</dbReference>
<dbReference type="PDB" id="5XLZ">
    <property type="method" value="X-ray"/>
    <property type="resolution" value="2.30 A"/>
    <property type="chains" value="E=49-189"/>
</dbReference>
<dbReference type="PDB" id="5XP3">
    <property type="method" value="X-ray"/>
    <property type="resolution" value="2.30 A"/>
    <property type="chains" value="E=49-189"/>
</dbReference>
<dbReference type="PDB" id="5YL2">
    <property type="method" value="X-ray"/>
    <property type="resolution" value="2.09 A"/>
    <property type="chains" value="E=49-189"/>
</dbReference>
<dbReference type="PDB" id="5YL4">
    <property type="method" value="X-ray"/>
    <property type="resolution" value="2.64 A"/>
    <property type="chains" value="E=49-189"/>
</dbReference>
<dbReference type="PDB" id="5YLJ">
    <property type="method" value="X-ray"/>
    <property type="resolution" value="2.70 A"/>
    <property type="chains" value="E=49-189"/>
</dbReference>
<dbReference type="PDB" id="5YLS">
    <property type="method" value="X-ray"/>
    <property type="resolution" value="3.00 A"/>
    <property type="chains" value="E=49-189"/>
</dbReference>
<dbReference type="PDB" id="5YZ3">
    <property type="method" value="X-ray"/>
    <property type="resolution" value="2.54 A"/>
    <property type="chains" value="E=49-189"/>
</dbReference>
<dbReference type="PDB" id="5Z4P">
    <property type="method" value="X-ray"/>
    <property type="resolution" value="2.50 A"/>
    <property type="chains" value="E=1-185"/>
</dbReference>
<dbReference type="PDB" id="5Z4U">
    <property type="method" value="X-ray"/>
    <property type="resolution" value="3.18 A"/>
    <property type="chains" value="E=49-189"/>
</dbReference>
<dbReference type="PDB" id="5ZXH">
    <property type="method" value="X-ray"/>
    <property type="resolution" value="2.80 A"/>
    <property type="chains" value="E=49-189"/>
</dbReference>
<dbReference type="PDB" id="6AGK">
    <property type="method" value="X-ray"/>
    <property type="resolution" value="2.80 A"/>
    <property type="chains" value="E=49-189"/>
</dbReference>
<dbReference type="PDB" id="6BS2">
    <property type="method" value="X-ray"/>
    <property type="resolution" value="2.65 A"/>
    <property type="chains" value="E=49-189"/>
</dbReference>
<dbReference type="PDB" id="6D88">
    <property type="method" value="X-ray"/>
    <property type="resolution" value="2.85 A"/>
    <property type="chains" value="E=49-189"/>
</dbReference>
<dbReference type="PDB" id="6EG5">
    <property type="method" value="X-ray"/>
    <property type="resolution" value="2.45 A"/>
    <property type="chains" value="E=49-189"/>
</dbReference>
<dbReference type="PDB" id="6F7C">
    <property type="method" value="X-ray"/>
    <property type="resolution" value="2.00 A"/>
    <property type="chains" value="E=49-189"/>
</dbReference>
<dbReference type="PDB" id="6FII">
    <property type="method" value="X-ray"/>
    <property type="resolution" value="2.40 A"/>
    <property type="chains" value="E=49-189"/>
</dbReference>
<dbReference type="PDB" id="6FJF">
    <property type="method" value="X-ray"/>
    <property type="resolution" value="2.40 A"/>
    <property type="chains" value="E=49-189"/>
</dbReference>
<dbReference type="PDB" id="6FJM">
    <property type="method" value="X-ray"/>
    <property type="resolution" value="2.10 A"/>
    <property type="chains" value="E=49-189"/>
</dbReference>
<dbReference type="PDB" id="6FKJ">
    <property type="method" value="X-ray"/>
    <property type="resolution" value="2.15 A"/>
    <property type="chains" value="E=47-189"/>
</dbReference>
<dbReference type="PDB" id="6FKL">
    <property type="method" value="X-ray"/>
    <property type="resolution" value="2.10 A"/>
    <property type="chains" value="E=47-189"/>
</dbReference>
<dbReference type="PDB" id="6GF3">
    <property type="method" value="X-ray"/>
    <property type="resolution" value="2.40 A"/>
    <property type="chains" value="E=49-189"/>
</dbReference>
<dbReference type="PDB" id="6GJ4">
    <property type="method" value="X-ray"/>
    <property type="resolution" value="2.40 A"/>
    <property type="chains" value="E=49-189"/>
</dbReference>
<dbReference type="PDB" id="6GZE">
    <property type="method" value="X-ray"/>
    <property type="resolution" value="2.49 A"/>
    <property type="chains" value="E=1-189"/>
</dbReference>
<dbReference type="PDB" id="6H9B">
    <property type="method" value="X-ray"/>
    <property type="resolution" value="2.75 A"/>
    <property type="chains" value="E=48-189"/>
</dbReference>
<dbReference type="PDB" id="6HX8">
    <property type="method" value="X-ray"/>
    <property type="resolution" value="2.40 A"/>
    <property type="chains" value="E=49-189"/>
</dbReference>
<dbReference type="PDB" id="6I5C">
    <property type="method" value="X-ray"/>
    <property type="resolution" value="2.95 A"/>
    <property type="chains" value="E=49-189"/>
</dbReference>
<dbReference type="PDB" id="6JCJ">
    <property type="method" value="X-ray"/>
    <property type="resolution" value="2.50 A"/>
    <property type="chains" value="E=49-189"/>
</dbReference>
<dbReference type="PDB" id="6K9V">
    <property type="method" value="X-ray"/>
    <property type="resolution" value="2.54 A"/>
    <property type="chains" value="E=49-189"/>
</dbReference>
<dbReference type="PDB" id="6KNZ">
    <property type="method" value="X-ray"/>
    <property type="resolution" value="2.48 A"/>
    <property type="chains" value="E=49-189"/>
</dbReference>
<dbReference type="PDB" id="6N47">
    <property type="method" value="X-ray"/>
    <property type="resolution" value="2.60 A"/>
    <property type="chains" value="E=49-189"/>
</dbReference>
<dbReference type="PDB" id="6QQN">
    <property type="method" value="X-ray"/>
    <property type="resolution" value="2.30 A"/>
    <property type="chains" value="E=49-189"/>
</dbReference>
<dbReference type="PDB" id="6QTN">
    <property type="method" value="X-ray"/>
    <property type="resolution" value="1.90 A"/>
    <property type="chains" value="E=49-189"/>
</dbReference>
<dbReference type="PDB" id="6S9E">
    <property type="method" value="X-ray"/>
    <property type="resolution" value="2.25 A"/>
    <property type="chains" value="E=1-189"/>
</dbReference>
<dbReference type="PDB" id="6SES">
    <property type="method" value="X-ray"/>
    <property type="resolution" value="2.00 A"/>
    <property type="chains" value="E=49-189"/>
</dbReference>
<dbReference type="PDB" id="6TDE">
    <property type="method" value="X-ray"/>
    <property type="resolution" value="2.29 A"/>
    <property type="chains" value="E=49-189"/>
</dbReference>
<dbReference type="PDB" id="6TH4">
    <property type="method" value="X-ray"/>
    <property type="resolution" value="2.12 A"/>
    <property type="chains" value="E=48-189"/>
</dbReference>
<dbReference type="PDB" id="6TIS">
    <property type="method" value="X-ray"/>
    <property type="resolution" value="2.30 A"/>
    <property type="chains" value="E=47-189"/>
</dbReference>
<dbReference type="PDB" id="6TIU">
    <property type="method" value="X-ray"/>
    <property type="resolution" value="3.57 A"/>
    <property type="chains" value="E=47-189"/>
</dbReference>
<dbReference type="PDB" id="6TIY">
    <property type="method" value="X-ray"/>
    <property type="resolution" value="2.29 A"/>
    <property type="chains" value="E=47-189"/>
</dbReference>
<dbReference type="PDB" id="6TIZ">
    <property type="method" value="X-ray"/>
    <property type="resolution" value="2.20 A"/>
    <property type="chains" value="E=47-189"/>
</dbReference>
<dbReference type="PDB" id="6X1C">
    <property type="method" value="X-ray"/>
    <property type="resolution" value="2.90 A"/>
    <property type="chains" value="E=49-189"/>
</dbReference>
<dbReference type="PDB" id="6X1E">
    <property type="method" value="X-ray"/>
    <property type="resolution" value="2.90 A"/>
    <property type="chains" value="E=49-189"/>
</dbReference>
<dbReference type="PDB" id="6X1F">
    <property type="method" value="X-ray"/>
    <property type="resolution" value="2.70 A"/>
    <property type="chains" value="E=49-189"/>
</dbReference>
<dbReference type="PDB" id="6XER">
    <property type="method" value="X-ray"/>
    <property type="resolution" value="2.50 A"/>
    <property type="chains" value="E=49-189"/>
</dbReference>
<dbReference type="PDB" id="6XES">
    <property type="method" value="X-ray"/>
    <property type="resolution" value="2.32 A"/>
    <property type="chains" value="E=49-189"/>
</dbReference>
<dbReference type="PDB" id="6XET">
    <property type="method" value="X-ray"/>
    <property type="resolution" value="2.60 A"/>
    <property type="chains" value="E=49-189"/>
</dbReference>
<dbReference type="PDB" id="6Y4M">
    <property type="method" value="X-ray"/>
    <property type="resolution" value="3.34 A"/>
    <property type="chains" value="E=49-189"/>
</dbReference>
<dbReference type="PDB" id="6Y4N">
    <property type="method" value="X-ray"/>
    <property type="resolution" value="2.85 A"/>
    <property type="chains" value="E=49-189"/>
</dbReference>
<dbReference type="PDB" id="6Y6D">
    <property type="method" value="X-ray"/>
    <property type="resolution" value="2.20 A"/>
    <property type="chains" value="E=49-189"/>
</dbReference>
<dbReference type="PDB" id="7AU5">
    <property type="method" value="X-ray"/>
    <property type="resolution" value="2.20 A"/>
    <property type="chains" value="E=49-189"/>
</dbReference>
<dbReference type="PDB" id="7CBZ">
    <property type="method" value="X-ray"/>
    <property type="resolution" value="2.61 A"/>
    <property type="chains" value="E=1-189"/>
</dbReference>
<dbReference type="PDB" id="7CDA">
    <property type="method" value="X-ray"/>
    <property type="resolution" value="2.66 A"/>
    <property type="chains" value="E=49-189"/>
</dbReference>
<dbReference type="PDB" id="7CE6">
    <property type="method" value="X-ray"/>
    <property type="resolution" value="2.69 A"/>
    <property type="chains" value="E=49-189"/>
</dbReference>
<dbReference type="PDB" id="7CE8">
    <property type="method" value="X-ray"/>
    <property type="resolution" value="2.73 A"/>
    <property type="chains" value="E=49-189"/>
</dbReference>
<dbReference type="PDB" id="7CEK">
    <property type="method" value="X-ray"/>
    <property type="resolution" value="2.70 A"/>
    <property type="chains" value="E=49-189"/>
</dbReference>
<dbReference type="PDB" id="7CLD">
    <property type="method" value="X-ray"/>
    <property type="resolution" value="2.61 A"/>
    <property type="chains" value="E=49-189"/>
</dbReference>
<dbReference type="PDB" id="7CPQ">
    <property type="method" value="X-ray"/>
    <property type="resolution" value="2.60 A"/>
    <property type="chains" value="E=1-189"/>
</dbReference>
<dbReference type="PDB" id="7DP8">
    <property type="method" value="X-ray"/>
    <property type="resolution" value="2.45 A"/>
    <property type="chains" value="E=49-189"/>
</dbReference>
<dbReference type="PDB" id="7E4P">
    <property type="method" value="X-ray"/>
    <property type="resolution" value="2.40 A"/>
    <property type="chains" value="E=50-187"/>
</dbReference>
<dbReference type="PDB" id="7E4Q">
    <property type="method" value="X-ray"/>
    <property type="resolution" value="2.50 A"/>
    <property type="chains" value="E=50-187"/>
</dbReference>
<dbReference type="PDB" id="7E4R">
    <property type="method" value="X-ray"/>
    <property type="resolution" value="2.60 A"/>
    <property type="chains" value="E=50-187"/>
</dbReference>
<dbReference type="PDB" id="7E4Y">
    <property type="method" value="X-ray"/>
    <property type="resolution" value="2.71 A"/>
    <property type="chains" value="E=50-187"/>
</dbReference>
<dbReference type="PDB" id="7E4Z">
    <property type="method" value="X-ray"/>
    <property type="resolution" value="2.69 A"/>
    <property type="chains" value="E=50-187"/>
</dbReference>
<dbReference type="PDB" id="7EMJ">
    <property type="method" value="X-ray"/>
    <property type="resolution" value="2.33 A"/>
    <property type="chains" value="E=1-189"/>
</dbReference>
<dbReference type="PDB" id="7EN3">
    <property type="method" value="X-ray"/>
    <property type="resolution" value="2.64 A"/>
    <property type="chains" value="E=50-185"/>
</dbReference>
<dbReference type="PDB" id="7EXC">
    <property type="method" value="X-ray"/>
    <property type="resolution" value="2.39 A"/>
    <property type="chains" value="E=1-189"/>
</dbReference>
<dbReference type="PDB" id="7JFR">
    <property type="method" value="X-ray"/>
    <property type="resolution" value="2.35 A"/>
    <property type="chains" value="E=50-187"/>
</dbReference>
<dbReference type="PDB" id="7L05">
    <property type="method" value="X-ray"/>
    <property type="resolution" value="2.21 A"/>
    <property type="chains" value="E=47-189"/>
</dbReference>
<dbReference type="PDB" id="7LZ7">
    <property type="method" value="X-ray"/>
    <property type="resolution" value="2.80 A"/>
    <property type="chains" value="E=49-189"/>
</dbReference>
<dbReference type="PDB" id="7LZ8">
    <property type="method" value="X-ray"/>
    <property type="resolution" value="2.92 A"/>
    <property type="chains" value="E=49-189"/>
</dbReference>
<dbReference type="PDB" id="7OGN">
    <property type="method" value="X-ray"/>
    <property type="resolution" value="2.20 A"/>
    <property type="chains" value="E=1-189"/>
</dbReference>
<dbReference type="PDB" id="7TTD">
    <property type="method" value="X-ray"/>
    <property type="resolution" value="2.27 A"/>
    <property type="chains" value="E=49-189"/>
</dbReference>
<dbReference type="PDB" id="7TTE">
    <property type="method" value="X-ray"/>
    <property type="resolution" value="2.70 A"/>
    <property type="chains" value="E=49-189"/>
</dbReference>
<dbReference type="PDB" id="7TTF">
    <property type="method" value="X-ray"/>
    <property type="resolution" value="2.10 A"/>
    <property type="chains" value="E=49-189"/>
</dbReference>
<dbReference type="PDB" id="7VMG">
    <property type="method" value="X-ray"/>
    <property type="resolution" value="2.39 A"/>
    <property type="chains" value="E=49-189"/>
</dbReference>
<dbReference type="PDB" id="7VMJ">
    <property type="method" value="X-ray"/>
    <property type="resolution" value="2.90 A"/>
    <property type="chains" value="E=49-189"/>
</dbReference>
<dbReference type="PDB" id="7VMK">
    <property type="method" value="X-ray"/>
    <property type="resolution" value="2.50 A"/>
    <property type="chains" value="E=49-189"/>
</dbReference>
<dbReference type="PDB" id="7Z2N">
    <property type="method" value="X-ray"/>
    <property type="resolution" value="2.17 A"/>
    <property type="chains" value="E=49-189"/>
</dbReference>
<dbReference type="PDB" id="7Z2P">
    <property type="method" value="X-ray"/>
    <property type="resolution" value="2.00 A"/>
    <property type="chains" value="E=49-189"/>
</dbReference>
<dbReference type="PDB" id="7Z7D">
    <property type="method" value="X-ray"/>
    <property type="resolution" value="2.00 A"/>
    <property type="chains" value="E=49-189"/>
</dbReference>
<dbReference type="PDB" id="7ZX2">
    <property type="method" value="X-ray"/>
    <property type="resolution" value="2.50 A"/>
    <property type="chains" value="E=1-189"/>
</dbReference>
<dbReference type="PDB" id="7ZYW">
    <property type="method" value="X-ray"/>
    <property type="resolution" value="2.45 A"/>
    <property type="chains" value="E=1-189"/>
</dbReference>
<dbReference type="PDB" id="8A0L">
    <property type="method" value="X-ray"/>
    <property type="resolution" value="2.00 A"/>
    <property type="chains" value="E=49-189"/>
</dbReference>
<dbReference type="PDB" id="8A9T">
    <property type="method" value="X-ray"/>
    <property type="resolution" value="2.30 A"/>
    <property type="chains" value="E=49-189"/>
</dbReference>
<dbReference type="PDB" id="8A9Z">
    <property type="method" value="X-ray"/>
    <property type="resolution" value="2.29 A"/>
    <property type="chains" value="E=49-189"/>
</dbReference>
<dbReference type="PDB" id="8AHM">
    <property type="method" value="X-ray"/>
    <property type="resolution" value="2.42 A"/>
    <property type="chains" value="E=1-189"/>
</dbReference>
<dbReference type="PDB" id="8ASN">
    <property type="method" value="X-ray"/>
    <property type="resolution" value="2.57 A"/>
    <property type="chains" value="E=49-189"/>
</dbReference>
<dbReference type="PDB" id="8B7A">
    <property type="method" value="X-ray"/>
    <property type="resolution" value="2.25 A"/>
    <property type="chains" value="E=49-189"/>
</dbReference>
<dbReference type="PDB" id="8B7B">
    <property type="method" value="X-ray"/>
    <property type="resolution" value="2.25 A"/>
    <property type="chains" value="E=49-189"/>
</dbReference>
<dbReference type="PDB" id="8B7C">
    <property type="method" value="X-ray"/>
    <property type="resolution" value="1.90 A"/>
    <property type="chains" value="E=49-189"/>
</dbReference>
<dbReference type="PDB" id="8BDE">
    <property type="method" value="X-ray"/>
    <property type="resolution" value="1.90 A"/>
    <property type="chains" value="E=49-189"/>
</dbReference>
<dbReference type="PDB" id="8BDF">
    <property type="method" value="X-ray"/>
    <property type="resolution" value="1.95 A"/>
    <property type="chains" value="E=49-189"/>
</dbReference>
<dbReference type="PDB" id="8BDG">
    <property type="method" value="X-ray"/>
    <property type="resolution" value="2.35 A"/>
    <property type="chains" value="E=49-189"/>
</dbReference>
<dbReference type="PDB" id="8C0F">
    <property type="method" value="X-ray"/>
    <property type="resolution" value="2.10 A"/>
    <property type="chains" value="E=49-189"/>
</dbReference>
<dbReference type="PDB" id="8CGZ">
    <property type="method" value="X-ray"/>
    <property type="resolution" value="2.53 A"/>
    <property type="chains" value="E=49-189"/>
</dbReference>
<dbReference type="PDB" id="8CLB">
    <property type="method" value="X-ray"/>
    <property type="resolution" value="3.00 A"/>
    <property type="chains" value="E=50-185"/>
</dbReference>
<dbReference type="PDB" id="8CLC">
    <property type="method" value="X-ray"/>
    <property type="resolution" value="2.70 A"/>
    <property type="chains" value="E=50-187"/>
</dbReference>
<dbReference type="PDB" id="8CLE">
    <property type="method" value="X-ray"/>
    <property type="resolution" value="3.20 A"/>
    <property type="chains" value="E=50-184"/>
</dbReference>
<dbReference type="PDB" id="8CLF">
    <property type="method" value="X-ray"/>
    <property type="resolution" value="2.70 A"/>
    <property type="chains" value="E=50-185"/>
</dbReference>
<dbReference type="PDB" id="8CLG">
    <property type="method" value="X-ray"/>
    <property type="resolution" value="2.80 A"/>
    <property type="chains" value="E=50-187"/>
</dbReference>
<dbReference type="PDB" id="8CLH">
    <property type="method" value="X-ray"/>
    <property type="resolution" value="2.50 A"/>
    <property type="chains" value="E=50-187"/>
</dbReference>
<dbReference type="PDB" id="8DIQ">
    <property type="method" value="X-ray"/>
    <property type="resolution" value="2.40 A"/>
    <property type="chains" value="E=49-189"/>
</dbReference>
<dbReference type="PDB" id="8HUH">
    <property type="method" value="X-ray"/>
    <property type="resolution" value="2.80 A"/>
    <property type="chains" value="E=49-189"/>
</dbReference>
<dbReference type="PDB" id="8JJB">
    <property type="method" value="X-ray"/>
    <property type="resolution" value="2.68 A"/>
    <property type="chains" value="E=1-189"/>
</dbReference>
<dbReference type="PDB" id="8JJC">
    <property type="method" value="X-ray"/>
    <property type="resolution" value="2.76 A"/>
    <property type="chains" value="E=1-189"/>
</dbReference>
<dbReference type="PDB" id="8R67">
    <property type="method" value="X-ray"/>
    <property type="resolution" value="2.20 A"/>
    <property type="chains" value="E=49-189"/>
</dbReference>
<dbReference type="PDB" id="8R6O">
    <property type="method" value="X-ray"/>
    <property type="resolution" value="2.20 A"/>
    <property type="chains" value="E=49-189"/>
</dbReference>
<dbReference type="PDB" id="8RIV">
    <property type="method" value="X-ray"/>
    <property type="resolution" value="2.78 A"/>
    <property type="chains" value="E=49-189"/>
</dbReference>
<dbReference type="PDB" id="8RIW">
    <property type="method" value="X-ray"/>
    <property type="resolution" value="2.57 A"/>
    <property type="chains" value="E=49-189"/>
</dbReference>
<dbReference type="PDB" id="8WD0">
    <property type="method" value="X-ray"/>
    <property type="resolution" value="2.60 A"/>
    <property type="chains" value="E=1-189"/>
</dbReference>
<dbReference type="PDB" id="8WMO">
    <property type="method" value="X-ray"/>
    <property type="resolution" value="2.89 A"/>
    <property type="chains" value="E=50-187"/>
</dbReference>
<dbReference type="PDB" id="8WMU">
    <property type="method" value="X-ray"/>
    <property type="resolution" value="2.70 A"/>
    <property type="chains" value="E=50-187"/>
</dbReference>
<dbReference type="PDB" id="8YEM">
    <property type="method" value="X-ray"/>
    <property type="resolution" value="2.74 A"/>
    <property type="chains" value="E=50-185"/>
</dbReference>
<dbReference type="PDB" id="8YER">
    <property type="method" value="X-ray"/>
    <property type="resolution" value="2.71 A"/>
    <property type="chains" value="E=49-189"/>
</dbReference>
<dbReference type="PDB" id="8YEU">
    <property type="method" value="X-ray"/>
    <property type="resolution" value="3.05 A"/>
    <property type="chains" value="E=49-189"/>
</dbReference>
<dbReference type="PDB" id="8YTX">
    <property type="method" value="X-ray"/>
    <property type="resolution" value="2.53 A"/>
    <property type="chains" value="E=49-189"/>
</dbReference>
<dbReference type="PDB" id="8YU9">
    <property type="method" value="X-ray"/>
    <property type="resolution" value="3.25 A"/>
    <property type="chains" value="E=49-189"/>
</dbReference>
<dbReference type="PDB" id="8YUA">
    <property type="method" value="X-ray"/>
    <property type="resolution" value="2.37 A"/>
    <property type="chains" value="E=49-189"/>
</dbReference>
<dbReference type="PDB" id="8ZB8">
    <property type="method" value="X-ray"/>
    <property type="resolution" value="2.94 A"/>
    <property type="chains" value="E=49-189"/>
</dbReference>
<dbReference type="PDB" id="9FYD">
    <property type="method" value="X-ray"/>
    <property type="resolution" value="2.30 A"/>
    <property type="chains" value="E=49-189"/>
</dbReference>
<dbReference type="PDB" id="9IM5">
    <property type="method" value="X-ray"/>
    <property type="resolution" value="2.86 A"/>
    <property type="chains" value="E=49-189"/>
</dbReference>
<dbReference type="PDB" id="9IMO">
    <property type="method" value="X-ray"/>
    <property type="resolution" value="2.75 A"/>
    <property type="chains" value="E=1-189"/>
</dbReference>
<dbReference type="PDBsum" id="1SA0"/>
<dbReference type="PDBsum" id="1SA1"/>
<dbReference type="PDBsum" id="1Z2B"/>
<dbReference type="PDBsum" id="3DU7"/>
<dbReference type="PDBsum" id="3E22"/>
<dbReference type="PDBsum" id="3HKB"/>
<dbReference type="PDBsum" id="3HKC"/>
<dbReference type="PDBsum" id="3HKD"/>
<dbReference type="PDBsum" id="3HKE"/>
<dbReference type="PDBsum" id="3N2G"/>
<dbReference type="PDBsum" id="3N2K"/>
<dbReference type="PDBsum" id="3RYC"/>
<dbReference type="PDBsum" id="3RYF"/>
<dbReference type="PDBsum" id="3RYH"/>
<dbReference type="PDBsum" id="3RYI"/>
<dbReference type="PDBsum" id="3UT5"/>
<dbReference type="PDBsum" id="4EB6"/>
<dbReference type="PDBsum" id="4I4T"/>
<dbReference type="PDBsum" id="4I50"/>
<dbReference type="PDBsum" id="4I55"/>
<dbReference type="PDBsum" id="4IHJ"/>
<dbReference type="PDBsum" id="4IIJ"/>
<dbReference type="PDBsum" id="4O2A"/>
<dbReference type="PDBsum" id="4O2B"/>
<dbReference type="PDBsum" id="4O4H"/>
<dbReference type="PDBsum" id="4O4I"/>
<dbReference type="PDBsum" id="4O4J"/>
<dbReference type="PDBsum" id="4O4L"/>
<dbReference type="PDBsum" id="4TUY"/>
<dbReference type="PDBsum" id="4TV8"/>
<dbReference type="PDBsum" id="4TV9"/>
<dbReference type="PDBsum" id="4X1I"/>
<dbReference type="PDBsum" id="4X1K"/>
<dbReference type="PDBsum" id="4X1Y"/>
<dbReference type="PDBsum" id="4X20"/>
<dbReference type="PDBsum" id="4YJ2"/>
<dbReference type="PDBsum" id="4YJ3"/>
<dbReference type="PDBsum" id="4ZHQ"/>
<dbReference type="PDBsum" id="4ZI7"/>
<dbReference type="PDBsum" id="4ZOL"/>
<dbReference type="PDBsum" id="5BMV"/>
<dbReference type="PDBsum" id="5C8Y"/>
<dbReference type="PDBsum" id="5CA0"/>
<dbReference type="PDBsum" id="5CA1"/>
<dbReference type="PDBsum" id="5CB4"/>
<dbReference type="PDBsum" id="5EZY"/>
<dbReference type="PDBsum" id="5FNV"/>
<dbReference type="PDBsum" id="5GON"/>
<dbReference type="PDBsum" id="5H74"/>
<dbReference type="PDBsum" id="5H7O"/>
<dbReference type="PDBsum" id="5IYZ"/>
<dbReference type="PDBsum" id="5J2T"/>
<dbReference type="PDBsum" id="5J2U"/>
<dbReference type="PDBsum" id="5JH7"/>
<dbReference type="PDBsum" id="5JQG"/>
<dbReference type="PDBsum" id="5JVD"/>
<dbReference type="PDBsum" id="5KX5"/>
<dbReference type="PDBsum" id="5LA6"/>
<dbReference type="PDBsum" id="5LOV"/>
<dbReference type="PDBsum" id="5LP6"/>
<dbReference type="PDBsum" id="5LXS"/>
<dbReference type="PDBsum" id="5LXT"/>
<dbReference type="PDBsum" id="5LYJ"/>
<dbReference type="PDBsum" id="5M7E"/>
<dbReference type="PDBsum" id="5M7G"/>
<dbReference type="PDBsum" id="5M8D"/>
<dbReference type="PDBsum" id="5M8G"/>
<dbReference type="PDBsum" id="5MF4"/>
<dbReference type="PDBsum" id="5NFZ"/>
<dbReference type="PDBsum" id="5NG1"/>
<dbReference type="PDBsum" id="5NJH"/>
<dbReference type="PDBsum" id="5O7A"/>
<dbReference type="PDBsum" id="5OSK"/>
<dbReference type="PDBsum" id="5OV7"/>
<dbReference type="PDBsum" id="5S4L"/>
<dbReference type="PDBsum" id="5S4M"/>
<dbReference type="PDBsum" id="5S4N"/>
<dbReference type="PDBsum" id="5S4O"/>
<dbReference type="PDBsum" id="5S4P"/>
<dbReference type="PDBsum" id="5S4Q"/>
<dbReference type="PDBsum" id="5S4R"/>
<dbReference type="PDBsum" id="5S4S"/>
<dbReference type="PDBsum" id="5S4T"/>
<dbReference type="PDBsum" id="5S4U"/>
<dbReference type="PDBsum" id="5S4V"/>
<dbReference type="PDBsum" id="5S4W"/>
<dbReference type="PDBsum" id="5S4X"/>
<dbReference type="PDBsum" id="5S4Y"/>
<dbReference type="PDBsum" id="5S4Z"/>
<dbReference type="PDBsum" id="5S50"/>
<dbReference type="PDBsum" id="5S51"/>
<dbReference type="PDBsum" id="5S52"/>
<dbReference type="PDBsum" id="5S53"/>
<dbReference type="PDBsum" id="5S54"/>
<dbReference type="PDBsum" id="5S55"/>
<dbReference type="PDBsum" id="5S56"/>
<dbReference type="PDBsum" id="5S57"/>
<dbReference type="PDBsum" id="5S58"/>
<dbReference type="PDBsum" id="5S59"/>
<dbReference type="PDBsum" id="5S5A"/>
<dbReference type="PDBsum" id="5S5B"/>
<dbReference type="PDBsum" id="5S5C"/>
<dbReference type="PDBsum" id="5S5D"/>
<dbReference type="PDBsum" id="5S5E"/>
<dbReference type="PDBsum" id="5S5F"/>
<dbReference type="PDBsum" id="5S5G"/>
<dbReference type="PDBsum" id="5S5H"/>
<dbReference type="PDBsum" id="5S5I"/>
<dbReference type="PDBsum" id="5S5J"/>
<dbReference type="PDBsum" id="5S5K"/>
<dbReference type="PDBsum" id="5S5L"/>
<dbReference type="PDBsum" id="5S5M"/>
<dbReference type="PDBsum" id="5S5N"/>
<dbReference type="PDBsum" id="5S5O"/>
<dbReference type="PDBsum" id="5S5P"/>
<dbReference type="PDBsum" id="5S5Q"/>
<dbReference type="PDBsum" id="5S5R"/>
<dbReference type="PDBsum" id="5S5S"/>
<dbReference type="PDBsum" id="5S5T"/>
<dbReference type="PDBsum" id="5S5U"/>
<dbReference type="PDBsum" id="5S5V"/>
<dbReference type="PDBsum" id="5S5W"/>
<dbReference type="PDBsum" id="5S5X"/>
<dbReference type="PDBsum" id="5S5Y"/>
<dbReference type="PDBsum" id="5S5Z"/>
<dbReference type="PDBsum" id="5S60"/>
<dbReference type="PDBsum" id="5S61"/>
<dbReference type="PDBsum" id="5S62"/>
<dbReference type="PDBsum" id="5S63"/>
<dbReference type="PDBsum" id="5S64"/>
<dbReference type="PDBsum" id="5S65"/>
<dbReference type="PDBsum" id="5S66"/>
<dbReference type="PDBsum" id="5S67"/>
<dbReference type="PDBsum" id="5SB3"/>
<dbReference type="PDBsum" id="5SB4"/>
<dbReference type="PDBsum" id="5SB5"/>
<dbReference type="PDBsum" id="5SB6"/>
<dbReference type="PDBsum" id="5SB7"/>
<dbReference type="PDBsum" id="5SB8"/>
<dbReference type="PDBsum" id="5SB9"/>
<dbReference type="PDBsum" id="5SBA"/>
<dbReference type="PDBsum" id="5SBB"/>
<dbReference type="PDBsum" id="5SBC"/>
<dbReference type="PDBsum" id="5SBD"/>
<dbReference type="PDBsum" id="5SBE"/>
<dbReference type="PDBsum" id="5XAF"/>
<dbReference type="PDBsum" id="5XAG"/>
<dbReference type="PDBsum" id="5XHC"/>
<dbReference type="PDBsum" id="5XI5"/>
<dbReference type="PDBsum" id="5XI7"/>
<dbReference type="PDBsum" id="5XIW"/>
<dbReference type="PDBsum" id="5XKE"/>
<dbReference type="PDBsum" id="5XKF"/>
<dbReference type="PDBsum" id="5XKG"/>
<dbReference type="PDBsum" id="5XKH"/>
<dbReference type="PDBsum" id="5XLT"/>
<dbReference type="PDBsum" id="5XLZ"/>
<dbReference type="PDBsum" id="5XP3"/>
<dbReference type="PDBsum" id="5YL2"/>
<dbReference type="PDBsum" id="5YL4"/>
<dbReference type="PDBsum" id="5YLJ"/>
<dbReference type="PDBsum" id="5YLS"/>
<dbReference type="PDBsum" id="5YZ3"/>
<dbReference type="PDBsum" id="5Z4P"/>
<dbReference type="PDBsum" id="5Z4U"/>
<dbReference type="PDBsum" id="5ZXH"/>
<dbReference type="PDBsum" id="6AGK"/>
<dbReference type="PDBsum" id="6BS2"/>
<dbReference type="PDBsum" id="6D88"/>
<dbReference type="PDBsum" id="6EG5"/>
<dbReference type="PDBsum" id="6F7C"/>
<dbReference type="PDBsum" id="6FII"/>
<dbReference type="PDBsum" id="6FJF"/>
<dbReference type="PDBsum" id="6FJM"/>
<dbReference type="PDBsum" id="6FKJ"/>
<dbReference type="PDBsum" id="6FKL"/>
<dbReference type="PDBsum" id="6GF3"/>
<dbReference type="PDBsum" id="6GJ4"/>
<dbReference type="PDBsum" id="6GZE"/>
<dbReference type="PDBsum" id="6H9B"/>
<dbReference type="PDBsum" id="6HX8"/>
<dbReference type="PDBsum" id="6I5C"/>
<dbReference type="PDBsum" id="6JCJ"/>
<dbReference type="PDBsum" id="6K9V"/>
<dbReference type="PDBsum" id="6KNZ"/>
<dbReference type="PDBsum" id="6N47"/>
<dbReference type="PDBsum" id="6QQN"/>
<dbReference type="PDBsum" id="6QTN"/>
<dbReference type="PDBsum" id="6S9E"/>
<dbReference type="PDBsum" id="6SES"/>
<dbReference type="PDBsum" id="6TDE"/>
<dbReference type="PDBsum" id="6TH4"/>
<dbReference type="PDBsum" id="6TIS"/>
<dbReference type="PDBsum" id="6TIU"/>
<dbReference type="PDBsum" id="6TIY"/>
<dbReference type="PDBsum" id="6TIZ"/>
<dbReference type="PDBsum" id="6X1C"/>
<dbReference type="PDBsum" id="6X1E"/>
<dbReference type="PDBsum" id="6X1F"/>
<dbReference type="PDBsum" id="6XER"/>
<dbReference type="PDBsum" id="6XES"/>
<dbReference type="PDBsum" id="6XET"/>
<dbReference type="PDBsum" id="6Y4M"/>
<dbReference type="PDBsum" id="6Y4N"/>
<dbReference type="PDBsum" id="6Y6D"/>
<dbReference type="PDBsum" id="7AU5"/>
<dbReference type="PDBsum" id="7CBZ"/>
<dbReference type="PDBsum" id="7CDA"/>
<dbReference type="PDBsum" id="7CE6"/>
<dbReference type="PDBsum" id="7CE8"/>
<dbReference type="PDBsum" id="7CEK"/>
<dbReference type="PDBsum" id="7CLD"/>
<dbReference type="PDBsum" id="7CPQ"/>
<dbReference type="PDBsum" id="7DP8"/>
<dbReference type="PDBsum" id="7E4P"/>
<dbReference type="PDBsum" id="7E4Q"/>
<dbReference type="PDBsum" id="7E4R"/>
<dbReference type="PDBsum" id="7E4Y"/>
<dbReference type="PDBsum" id="7E4Z"/>
<dbReference type="PDBsum" id="7EMJ"/>
<dbReference type="PDBsum" id="7EN3"/>
<dbReference type="PDBsum" id="7EXC"/>
<dbReference type="PDBsum" id="7JFR"/>
<dbReference type="PDBsum" id="7L05"/>
<dbReference type="PDBsum" id="7LZ7"/>
<dbReference type="PDBsum" id="7LZ8"/>
<dbReference type="PDBsum" id="7OGN"/>
<dbReference type="PDBsum" id="7TTD"/>
<dbReference type="PDBsum" id="7TTE"/>
<dbReference type="PDBsum" id="7TTF"/>
<dbReference type="PDBsum" id="7VMG"/>
<dbReference type="PDBsum" id="7VMJ"/>
<dbReference type="PDBsum" id="7VMK"/>
<dbReference type="PDBsum" id="7Z2N"/>
<dbReference type="PDBsum" id="7Z2P"/>
<dbReference type="PDBsum" id="7Z7D"/>
<dbReference type="PDBsum" id="7ZX2"/>
<dbReference type="PDBsum" id="7ZYW"/>
<dbReference type="PDBsum" id="8A0L"/>
<dbReference type="PDBsum" id="8A9T"/>
<dbReference type="PDBsum" id="8A9Z"/>
<dbReference type="PDBsum" id="8AHM"/>
<dbReference type="PDBsum" id="8ASN"/>
<dbReference type="PDBsum" id="8B7A"/>
<dbReference type="PDBsum" id="8B7B"/>
<dbReference type="PDBsum" id="8B7C"/>
<dbReference type="PDBsum" id="8BDE"/>
<dbReference type="PDBsum" id="8BDF"/>
<dbReference type="PDBsum" id="8BDG"/>
<dbReference type="PDBsum" id="8C0F"/>
<dbReference type="PDBsum" id="8CGZ"/>
<dbReference type="PDBsum" id="8CLB"/>
<dbReference type="PDBsum" id="8CLC"/>
<dbReference type="PDBsum" id="8CLE"/>
<dbReference type="PDBsum" id="8CLF"/>
<dbReference type="PDBsum" id="8CLG"/>
<dbReference type="PDBsum" id="8CLH"/>
<dbReference type="PDBsum" id="8DIQ"/>
<dbReference type="PDBsum" id="8HUH"/>
<dbReference type="PDBsum" id="8JJB"/>
<dbReference type="PDBsum" id="8JJC"/>
<dbReference type="PDBsum" id="8R67"/>
<dbReference type="PDBsum" id="8R6O"/>
<dbReference type="PDBsum" id="8RIV"/>
<dbReference type="PDBsum" id="8RIW"/>
<dbReference type="PDBsum" id="8WD0"/>
<dbReference type="PDBsum" id="8WMO"/>
<dbReference type="PDBsum" id="8WMU"/>
<dbReference type="PDBsum" id="8YEM"/>
<dbReference type="PDBsum" id="8YER"/>
<dbReference type="PDBsum" id="8YEU"/>
<dbReference type="PDBsum" id="8YTX"/>
<dbReference type="PDBsum" id="8YU9"/>
<dbReference type="PDBsum" id="8YUA"/>
<dbReference type="PDBsum" id="8ZB8"/>
<dbReference type="PDBsum" id="9FYD"/>
<dbReference type="PDBsum" id="9IM5"/>
<dbReference type="PDBsum" id="9IMO"/>
<dbReference type="SMR" id="P63043"/>
<dbReference type="DIP" id="DIP-61411N"/>
<dbReference type="FunCoup" id="P63043">
    <property type="interactions" value="153"/>
</dbReference>
<dbReference type="STRING" id="10116.ENSRNOP00000073294"/>
<dbReference type="iPTMnet" id="P63043"/>
<dbReference type="PhosphoSitePlus" id="P63043"/>
<dbReference type="Ensembl" id="ENSRNOT00000087709.2">
    <molecule id="P63043-2"/>
    <property type="protein sequence ID" value="ENSRNOP00000069450.1"/>
    <property type="gene ID" value="ENSRNOG00000053334.2"/>
</dbReference>
<dbReference type="Ensembl" id="ENSRNOT00000091567.2">
    <molecule id="P63043-3"/>
    <property type="protein sequence ID" value="ENSRNOP00000073294.1"/>
    <property type="gene ID" value="ENSRNOG00000053334.2"/>
</dbReference>
<dbReference type="GeneID" id="79423"/>
<dbReference type="KEGG" id="rno:79423"/>
<dbReference type="UCSC" id="RGD:69349">
    <property type="organism name" value="rat"/>
</dbReference>
<dbReference type="AGR" id="RGD:69349"/>
<dbReference type="CTD" id="81551"/>
<dbReference type="RGD" id="69349">
    <property type="gene designation" value="Stmn4"/>
</dbReference>
<dbReference type="VEuPathDB" id="HostDB:ENSRNOG00000053334"/>
<dbReference type="GeneTree" id="ENSGT01030000234597"/>
<dbReference type="InParanoid" id="P63043"/>
<dbReference type="OMA" id="LGWCAIK"/>
<dbReference type="OrthoDB" id="5986631at2759"/>
<dbReference type="TreeFam" id="TF326935"/>
<dbReference type="EvolutionaryTrace" id="P63043"/>
<dbReference type="PRO" id="PR:P63043"/>
<dbReference type="Proteomes" id="UP000002494">
    <property type="component" value="Chromosome 15"/>
</dbReference>
<dbReference type="Bgee" id="ENSRNOG00000053334">
    <property type="expression patterns" value="Expressed in cerebellum and 14 other cell types or tissues"/>
</dbReference>
<dbReference type="ExpressionAtlas" id="P63043">
    <property type="expression patterns" value="baseline and differential"/>
</dbReference>
<dbReference type="GO" id="GO:0005737">
    <property type="term" value="C:cytoplasm"/>
    <property type="evidence" value="ECO:0000318"/>
    <property type="project" value="GO_Central"/>
</dbReference>
<dbReference type="GO" id="GO:0005794">
    <property type="term" value="C:Golgi apparatus"/>
    <property type="evidence" value="ECO:0007669"/>
    <property type="project" value="UniProtKB-SubCell"/>
</dbReference>
<dbReference type="GO" id="GO:0030426">
    <property type="term" value="C:growth cone"/>
    <property type="evidence" value="ECO:0007669"/>
    <property type="project" value="UniProtKB-SubCell"/>
</dbReference>
<dbReference type="GO" id="GO:0043005">
    <property type="term" value="C:neuron projection"/>
    <property type="evidence" value="ECO:0000318"/>
    <property type="project" value="GO_Central"/>
</dbReference>
<dbReference type="GO" id="GO:0015631">
    <property type="term" value="F:tubulin binding"/>
    <property type="evidence" value="ECO:0000318"/>
    <property type="project" value="GO_Central"/>
</dbReference>
<dbReference type="GO" id="GO:0007019">
    <property type="term" value="P:microtubule depolymerization"/>
    <property type="evidence" value="ECO:0000318"/>
    <property type="project" value="GO_Central"/>
</dbReference>
<dbReference type="GO" id="GO:0031175">
    <property type="term" value="P:neuron projection development"/>
    <property type="evidence" value="ECO:0000318"/>
    <property type="project" value="GO_Central"/>
</dbReference>
<dbReference type="GO" id="GO:0031110">
    <property type="term" value="P:regulation of microtubule polymerization or depolymerization"/>
    <property type="evidence" value="ECO:0000318"/>
    <property type="project" value="GO_Central"/>
</dbReference>
<dbReference type="Gene3D" id="6.10.280.30">
    <property type="match status" value="1"/>
</dbReference>
<dbReference type="InterPro" id="IPR030514">
    <property type="entry name" value="Stathmin_CS"/>
</dbReference>
<dbReference type="InterPro" id="IPR000956">
    <property type="entry name" value="Stathmin_fam"/>
</dbReference>
<dbReference type="InterPro" id="IPR036002">
    <property type="entry name" value="Stathmin_sf"/>
</dbReference>
<dbReference type="PANTHER" id="PTHR10104">
    <property type="entry name" value="STATHMIN"/>
    <property type="match status" value="1"/>
</dbReference>
<dbReference type="PANTHER" id="PTHR10104:SF6">
    <property type="entry name" value="STATHMIN-4"/>
    <property type="match status" value="1"/>
</dbReference>
<dbReference type="Pfam" id="PF00836">
    <property type="entry name" value="Stathmin"/>
    <property type="match status" value="1"/>
</dbReference>
<dbReference type="PIRSF" id="PIRSF002285">
    <property type="entry name" value="Stathmin"/>
    <property type="match status" value="1"/>
</dbReference>
<dbReference type="PRINTS" id="PR00345">
    <property type="entry name" value="STATHMIN"/>
</dbReference>
<dbReference type="SUPFAM" id="SSF101494">
    <property type="entry name" value="Stathmin"/>
    <property type="match status" value="1"/>
</dbReference>
<dbReference type="PROSITE" id="PS00563">
    <property type="entry name" value="STATHMIN_1"/>
    <property type="match status" value="1"/>
</dbReference>
<dbReference type="PROSITE" id="PS01041">
    <property type="entry name" value="STATHMIN_2"/>
    <property type="match status" value="1"/>
</dbReference>
<dbReference type="PROSITE" id="PS51663">
    <property type="entry name" value="STATHMIN_3"/>
    <property type="match status" value="1"/>
</dbReference>
<proteinExistence type="evidence at protein level"/>
<keyword id="KW-0002">3D-structure</keyword>
<keyword id="KW-0025">Alternative splicing</keyword>
<keyword id="KW-0966">Cell projection</keyword>
<keyword id="KW-0175">Coiled coil</keyword>
<keyword id="KW-0333">Golgi apparatus</keyword>
<keyword id="KW-0449">Lipoprotein</keyword>
<keyword id="KW-0564">Palmitate</keyword>
<keyword id="KW-0597">Phosphoprotein</keyword>
<keyword id="KW-1185">Reference proteome</keyword>
<comment type="function">
    <text evidence="5 6 7">Exhibits microtubule-destabilizing activity.</text>
</comment>
<comment type="subcellular location">
    <subcellularLocation>
        <location evidence="5">Golgi apparatus</location>
    </subcellularLocation>
    <subcellularLocation>
        <location evidence="5">Cell projection</location>
        <location evidence="5">Growth cone</location>
    </subcellularLocation>
    <subcellularLocation>
        <location evidence="5">Cell projection</location>
        <location evidence="5">Axon</location>
    </subcellularLocation>
</comment>
<comment type="alternative products">
    <event type="alternative splicing"/>
    <isoform>
        <id>P63043-1</id>
        <id>O35414-1</id>
        <name>1</name>
        <sequence type="displayed"/>
    </isoform>
    <isoform>
        <id>P63043-2</id>
        <id>O35414-2</id>
        <name>2</name>
        <name>RB3'</name>
        <sequence type="described" ref="VSP_006281"/>
    </isoform>
    <isoform>
        <id>P63043-3</id>
        <id>O35414-3</id>
        <name>3</name>
        <name>RB3''</name>
        <sequence type="described" ref="VSP_006280"/>
    </isoform>
</comment>
<comment type="tissue specificity">
    <text evidence="7 8">Nervous tissue.</text>
</comment>
<comment type="similarity">
    <text evidence="10">Belongs to the stathmin family.</text>
</comment>